<reference key="1">
    <citation type="submission" date="2007-03" db="EMBL/GenBank/DDBJ databases">
        <title>Sequencing analysis of Aethionema grandiflorum chloroplast DNA.</title>
        <authorList>
            <person name="Hosouchi T."/>
            <person name="Tsuruoka H."/>
            <person name="Kotani H."/>
        </authorList>
    </citation>
    <scope>NUCLEOTIDE SEQUENCE [LARGE SCALE GENOMIC DNA]</scope>
</reference>
<name>RPOC2_AETGR</name>
<keyword id="KW-0150">Chloroplast</keyword>
<keyword id="KW-0240">DNA-directed RNA polymerase</keyword>
<keyword id="KW-0479">Metal-binding</keyword>
<keyword id="KW-0548">Nucleotidyltransferase</keyword>
<keyword id="KW-0934">Plastid</keyword>
<keyword id="KW-0804">Transcription</keyword>
<keyword id="KW-0808">Transferase</keyword>
<keyword id="KW-0862">Zinc</keyword>
<comment type="function">
    <text evidence="1">DNA-dependent RNA polymerase catalyzes the transcription of DNA into RNA using the four ribonucleoside triphosphates as substrates.</text>
</comment>
<comment type="catalytic activity">
    <reaction evidence="1">
        <text>RNA(n) + a ribonucleoside 5'-triphosphate = RNA(n+1) + diphosphate</text>
        <dbReference type="Rhea" id="RHEA:21248"/>
        <dbReference type="Rhea" id="RHEA-COMP:14527"/>
        <dbReference type="Rhea" id="RHEA-COMP:17342"/>
        <dbReference type="ChEBI" id="CHEBI:33019"/>
        <dbReference type="ChEBI" id="CHEBI:61557"/>
        <dbReference type="ChEBI" id="CHEBI:140395"/>
        <dbReference type="EC" id="2.7.7.6"/>
    </reaction>
</comment>
<comment type="cofactor">
    <cofactor evidence="1">
        <name>Zn(2+)</name>
        <dbReference type="ChEBI" id="CHEBI:29105"/>
    </cofactor>
    <text evidence="1">Binds 1 Zn(2+) ion per subunit.</text>
</comment>
<comment type="subunit">
    <text evidence="1">In plastids the minimal PEP RNA polymerase catalytic core is composed of four subunits: alpha, beta, beta', and beta''. When a (nuclear-encoded) sigma factor is associated with the core the holoenzyme is formed, which can initiate transcription.</text>
</comment>
<comment type="subcellular location">
    <subcellularLocation>
        <location evidence="1">Plastid</location>
        <location evidence="1">Chloroplast</location>
    </subcellularLocation>
</comment>
<comment type="similarity">
    <text evidence="1">Belongs to the RNA polymerase beta' chain family. RpoC2 subfamily.</text>
</comment>
<organism>
    <name type="scientific">Aethionema grandiflorum</name>
    <name type="common">Persian stone-cress</name>
    <dbReference type="NCBI Taxonomy" id="72657"/>
    <lineage>
        <taxon>Eukaryota</taxon>
        <taxon>Viridiplantae</taxon>
        <taxon>Streptophyta</taxon>
        <taxon>Embryophyta</taxon>
        <taxon>Tracheophyta</taxon>
        <taxon>Spermatophyta</taxon>
        <taxon>Magnoliopsida</taxon>
        <taxon>eudicotyledons</taxon>
        <taxon>Gunneridae</taxon>
        <taxon>Pentapetalae</taxon>
        <taxon>rosids</taxon>
        <taxon>malvids</taxon>
        <taxon>Brassicales</taxon>
        <taxon>Brassicaceae</taxon>
        <taxon>Aethionemeae</taxon>
        <taxon>Aethionema</taxon>
    </lineage>
</organism>
<evidence type="ECO:0000255" key="1">
    <source>
        <dbReference type="HAMAP-Rule" id="MF_01324"/>
    </source>
</evidence>
<dbReference type="EC" id="2.7.7.6" evidence="1"/>
<dbReference type="EMBL" id="AP009367">
    <property type="protein sequence ID" value="BAF49844.1"/>
    <property type="molecule type" value="Genomic_DNA"/>
</dbReference>
<dbReference type="RefSeq" id="YP_001123020.1">
    <property type="nucleotide sequence ID" value="NC_009266.1"/>
</dbReference>
<dbReference type="SMR" id="A4QJI9"/>
<dbReference type="GeneID" id="4962258"/>
<dbReference type="GO" id="GO:0009507">
    <property type="term" value="C:chloroplast"/>
    <property type="evidence" value="ECO:0007669"/>
    <property type="project" value="UniProtKB-SubCell"/>
</dbReference>
<dbReference type="GO" id="GO:0000428">
    <property type="term" value="C:DNA-directed RNA polymerase complex"/>
    <property type="evidence" value="ECO:0007669"/>
    <property type="project" value="UniProtKB-KW"/>
</dbReference>
<dbReference type="GO" id="GO:0005739">
    <property type="term" value="C:mitochondrion"/>
    <property type="evidence" value="ECO:0007669"/>
    <property type="project" value="GOC"/>
</dbReference>
<dbReference type="GO" id="GO:0003677">
    <property type="term" value="F:DNA binding"/>
    <property type="evidence" value="ECO:0007669"/>
    <property type="project" value="UniProtKB-UniRule"/>
</dbReference>
<dbReference type="GO" id="GO:0003899">
    <property type="term" value="F:DNA-directed RNA polymerase activity"/>
    <property type="evidence" value="ECO:0007669"/>
    <property type="project" value="UniProtKB-UniRule"/>
</dbReference>
<dbReference type="GO" id="GO:0008270">
    <property type="term" value="F:zinc ion binding"/>
    <property type="evidence" value="ECO:0007669"/>
    <property type="project" value="UniProtKB-UniRule"/>
</dbReference>
<dbReference type="GO" id="GO:0006351">
    <property type="term" value="P:DNA-templated transcription"/>
    <property type="evidence" value="ECO:0007669"/>
    <property type="project" value="UniProtKB-UniRule"/>
</dbReference>
<dbReference type="CDD" id="cd02655">
    <property type="entry name" value="RNAP_beta'_C"/>
    <property type="match status" value="1"/>
</dbReference>
<dbReference type="FunFam" id="1.10.132.30:FF:000002">
    <property type="entry name" value="DNA-directed RNA polymerase subunit beta"/>
    <property type="match status" value="1"/>
</dbReference>
<dbReference type="FunFam" id="1.10.1790.20:FF:000002">
    <property type="entry name" value="DNA-directed RNA polymerase subunit beta"/>
    <property type="match status" value="1"/>
</dbReference>
<dbReference type="Gene3D" id="1.10.132.30">
    <property type="match status" value="1"/>
</dbReference>
<dbReference type="Gene3D" id="1.10.150.390">
    <property type="match status" value="1"/>
</dbReference>
<dbReference type="Gene3D" id="1.10.1790.20">
    <property type="match status" value="1"/>
</dbReference>
<dbReference type="Gene3D" id="1.10.274.100">
    <property type="entry name" value="RNA polymerase Rpb1, domain 3"/>
    <property type="match status" value="1"/>
</dbReference>
<dbReference type="HAMAP" id="MF_01324">
    <property type="entry name" value="RNApol_bact_RpoC2"/>
    <property type="match status" value="1"/>
</dbReference>
<dbReference type="InterPro" id="IPR012756">
    <property type="entry name" value="DNA-dir_RpoC2_beta_pp"/>
</dbReference>
<dbReference type="InterPro" id="IPR050254">
    <property type="entry name" value="RNA_pol_beta''_euk"/>
</dbReference>
<dbReference type="InterPro" id="IPR042102">
    <property type="entry name" value="RNA_pol_Rpb1_3_sf"/>
</dbReference>
<dbReference type="InterPro" id="IPR007083">
    <property type="entry name" value="RNA_pol_Rpb1_4"/>
</dbReference>
<dbReference type="InterPro" id="IPR007081">
    <property type="entry name" value="RNA_pol_Rpb1_5"/>
</dbReference>
<dbReference type="InterPro" id="IPR038120">
    <property type="entry name" value="Rpb1_funnel_sf"/>
</dbReference>
<dbReference type="NCBIfam" id="TIGR02388">
    <property type="entry name" value="rpoC2_cyan"/>
    <property type="match status" value="1"/>
</dbReference>
<dbReference type="PANTHER" id="PTHR34995">
    <property type="entry name" value="DNA-DIRECTED RNA POLYMERASE SUBUNIT BETA"/>
    <property type="match status" value="1"/>
</dbReference>
<dbReference type="PANTHER" id="PTHR34995:SF1">
    <property type="entry name" value="DNA-DIRECTED RNA POLYMERASE SUBUNIT BETA"/>
    <property type="match status" value="1"/>
</dbReference>
<dbReference type="Pfam" id="PF05000">
    <property type="entry name" value="RNA_pol_Rpb1_4"/>
    <property type="match status" value="1"/>
</dbReference>
<dbReference type="Pfam" id="PF04998">
    <property type="entry name" value="RNA_pol_Rpb1_5"/>
    <property type="match status" value="2"/>
</dbReference>
<dbReference type="SUPFAM" id="SSF64484">
    <property type="entry name" value="beta and beta-prime subunits of DNA dependent RNA-polymerase"/>
    <property type="match status" value="1"/>
</dbReference>
<feature type="chain" id="PRO_0000353543" description="DNA-directed RNA polymerase subunit beta''">
    <location>
        <begin position="1"/>
        <end position="1383"/>
    </location>
</feature>
<feature type="binding site" evidence="1">
    <location>
        <position position="220"/>
    </location>
    <ligand>
        <name>Zn(2+)</name>
        <dbReference type="ChEBI" id="CHEBI:29105"/>
    </ligand>
</feature>
<feature type="binding site" evidence="1">
    <location>
        <position position="293"/>
    </location>
    <ligand>
        <name>Zn(2+)</name>
        <dbReference type="ChEBI" id="CHEBI:29105"/>
    </ligand>
</feature>
<feature type="binding site" evidence="1">
    <location>
        <position position="300"/>
    </location>
    <ligand>
        <name>Zn(2+)</name>
        <dbReference type="ChEBI" id="CHEBI:29105"/>
    </ligand>
</feature>
<feature type="binding site" evidence="1">
    <location>
        <position position="303"/>
    </location>
    <ligand>
        <name>Zn(2+)</name>
        <dbReference type="ChEBI" id="CHEBI:29105"/>
    </ligand>
</feature>
<sequence length="1383" mass="157378">MGERANLVFHNKIIDGTAIKRLISRLIDHFGMAYTSHILDQVKTLGFQQATATSISLGIDDLLTIPSKGWLVQDAEQQSLILEKHHHYGNVHAVEKLRQSIEIWYATSEYLRQEMNPNFRMTDPFNPVHMMSFSGARGNASQVHQLVGMRGLMSDPQGQMIDLPIQSNLREGLSLTEYIISCYGARKGVVDTAVRTSDAGYLTRRLVEVVQHIVVRRTDCGTIRGISVSPRNKNRMMSEPIFIQTLIGRVLADDIYIGSRCVAFRNQDLGIGLVNRFITFGTQSISIRTPFTCRSTSWICRFCYGRSPTHGDLVELGEAVGIIAGQSIGEPGTQLTLRTFHTGGVFTGGTAEHVRAPYNGKIKFNEDLVHPTRTRHGHPAFLCYIDLSVIIESEDIIHSVTIPPKSFLLVQNDQYVESEQVIAEIREGTYTFRFKERVRKYIYSDSEGEMHWSTDVYHAPEFTYSNVHLVPKTSHLWILSGGSCGSSLISFSIHKDQDQMNIPFLSVKRKSICSLSVNNDQVSQKFLSSDFSDKKKSGIPDYSELNGIVGNSHYNLIYSAIFHENSDLLAKRRRNRFLIPFQSIQEQEKEFMPHSGISIAIPINGIFRKNSIFSFFDDPRYRRKSSGILKYGTIEADSIIQKEDMIEYRGVHKFKKKYKMKVDRFFFIPEEVHILPESSVIMVQNYSIIRVDTRITLNIRSQVGGLIRVERKKKRIELKIFSGDIHFPDKTDKIFRHSGILIPPGRGKPNSRESKKVQNWIYVQRITPTKKKFFVLVRPVATYEIADSINLATLFPQDLFREKNNIQLRVVNYILYGNGNPTRGISDTSIQLVRTCLVLNWDQDNKKSSLEEARAFFVAVSTKGLIRDFIRIGLVKSHISYIRKRTNPPDSGLISADHMNPFYSISPKAGIQQSLSQNNGTIRMFLNRNKESQFLLILSSSNCFRMGPFNHVKYHNVINQSIKKNPLITIQKASGPLGTTIQISNFYSFFPLLTYNKMSVIKYLQLDNLKQILKVINSYLIDENGRICNRDPYSNVVLNPFKLNWYFLHQNYHHNYCEEISTIISLGQFFCENLCIAKKGPHLKSGQVLIVQMDSVVLRCAKPYLATPGAKVHGHYGEILYEGDTLVTFIYEKSRSGDITQGLPKVEQVLEVRSIDSISMNLEKRIKGWNKYITRILGIPWGFLVGAELTIVQSRISLVNKIQKVYRSQGVQIHNRHIEIIVRQITSKVLVSEEGMSNVFLPGELIGLLRAERTGRALEEAICYRAILLGITRASLNTQSFISEASFQETARVLAKAALRGRIDWLKGLKENVVLGGGIPAGTGFNKGLVHCSRQHTNILLEKKTKNLCLFEEDMRDILFYHREFFDSSISKLERSFLGFNYS</sequence>
<protein>
    <recommendedName>
        <fullName evidence="1">DNA-directed RNA polymerase subunit beta''</fullName>
        <ecNumber evidence="1">2.7.7.6</ecNumber>
    </recommendedName>
    <alternativeName>
        <fullName evidence="1">PEP</fullName>
    </alternativeName>
    <alternativeName>
        <fullName evidence="1">Plastid-encoded RNA polymerase subunit beta''</fullName>
        <shortName evidence="1">RNA polymerase subunit beta''</shortName>
    </alternativeName>
</protein>
<proteinExistence type="inferred from homology"/>
<accession>A4QJI9</accession>
<gene>
    <name evidence="1" type="primary">rpoC2</name>
</gene>
<geneLocation type="chloroplast"/>